<protein>
    <recommendedName>
        <fullName evidence="1">Small ribosomal subunit protein bS21</fullName>
    </recommendedName>
    <alternativeName>
        <fullName evidence="2">30S ribosomal protein S21</fullName>
    </alternativeName>
</protein>
<name>RS21_BORHD</name>
<sequence>MVTVNVDKNEGLEKALKRFKRMIEKEAIIREWKRREYYEKPSTIRVKKEKAFKRKQAKKVRKLKQKIGK</sequence>
<evidence type="ECO:0000255" key="1">
    <source>
        <dbReference type="HAMAP-Rule" id="MF_00358"/>
    </source>
</evidence>
<evidence type="ECO:0000305" key="2"/>
<keyword id="KW-0687">Ribonucleoprotein</keyword>
<keyword id="KW-0689">Ribosomal protein</keyword>
<dbReference type="EMBL" id="CP000048">
    <property type="protein sequence ID" value="AAX16773.1"/>
    <property type="molecule type" value="Genomic_DNA"/>
</dbReference>
<dbReference type="RefSeq" id="WP_012422030.1">
    <property type="nucleotide sequence ID" value="NZ_CP073136.1"/>
</dbReference>
<dbReference type="SMR" id="B2RZW7"/>
<dbReference type="GeneID" id="71843070"/>
<dbReference type="KEGG" id="bhr:BH0256"/>
<dbReference type="HOGENOM" id="CLU_159258_1_2_12"/>
<dbReference type="Proteomes" id="UP000008834">
    <property type="component" value="Chromosome"/>
</dbReference>
<dbReference type="GO" id="GO:1990904">
    <property type="term" value="C:ribonucleoprotein complex"/>
    <property type="evidence" value="ECO:0007669"/>
    <property type="project" value="UniProtKB-KW"/>
</dbReference>
<dbReference type="GO" id="GO:0005840">
    <property type="term" value="C:ribosome"/>
    <property type="evidence" value="ECO:0007669"/>
    <property type="project" value="UniProtKB-KW"/>
</dbReference>
<dbReference type="GO" id="GO:0003735">
    <property type="term" value="F:structural constituent of ribosome"/>
    <property type="evidence" value="ECO:0007669"/>
    <property type="project" value="InterPro"/>
</dbReference>
<dbReference type="GO" id="GO:0006412">
    <property type="term" value="P:translation"/>
    <property type="evidence" value="ECO:0007669"/>
    <property type="project" value="UniProtKB-UniRule"/>
</dbReference>
<dbReference type="Gene3D" id="1.20.5.1150">
    <property type="entry name" value="Ribosomal protein S8"/>
    <property type="match status" value="1"/>
</dbReference>
<dbReference type="HAMAP" id="MF_00358">
    <property type="entry name" value="Ribosomal_bS21"/>
    <property type="match status" value="1"/>
</dbReference>
<dbReference type="InterPro" id="IPR001911">
    <property type="entry name" value="Ribosomal_bS21"/>
</dbReference>
<dbReference type="InterPro" id="IPR018278">
    <property type="entry name" value="Ribosomal_bS21_CS"/>
</dbReference>
<dbReference type="InterPro" id="IPR038380">
    <property type="entry name" value="Ribosomal_bS21_sf"/>
</dbReference>
<dbReference type="NCBIfam" id="TIGR00030">
    <property type="entry name" value="S21p"/>
    <property type="match status" value="1"/>
</dbReference>
<dbReference type="PANTHER" id="PTHR21109">
    <property type="entry name" value="MITOCHONDRIAL 28S RIBOSOMAL PROTEIN S21"/>
    <property type="match status" value="1"/>
</dbReference>
<dbReference type="PANTHER" id="PTHR21109:SF22">
    <property type="entry name" value="SMALL RIBOSOMAL SUBUNIT PROTEIN BS21"/>
    <property type="match status" value="1"/>
</dbReference>
<dbReference type="Pfam" id="PF01165">
    <property type="entry name" value="Ribosomal_S21"/>
    <property type="match status" value="1"/>
</dbReference>
<dbReference type="PRINTS" id="PR00976">
    <property type="entry name" value="RIBOSOMALS21"/>
</dbReference>
<dbReference type="PROSITE" id="PS01181">
    <property type="entry name" value="RIBOSOMAL_S21"/>
    <property type="match status" value="1"/>
</dbReference>
<proteinExistence type="inferred from homology"/>
<reference key="1">
    <citation type="submission" date="2004-12" db="EMBL/GenBank/DDBJ databases">
        <title>The genome sequence of Borrelia hermsii and Borrelia turicatae: comparative analysis of two agents of endemic N. America relapsing fever.</title>
        <authorList>
            <person name="Porcella S.F."/>
            <person name="Raffel S.J."/>
            <person name="Schrumpf M.E."/>
            <person name="Montgomery B."/>
            <person name="Smith T."/>
            <person name="Schwan T.G."/>
        </authorList>
    </citation>
    <scope>NUCLEOTIDE SEQUENCE [LARGE SCALE GENOMIC DNA]</scope>
    <source>
        <strain>HS1 / DAH</strain>
    </source>
</reference>
<accession>B2RZW7</accession>
<gene>
    <name evidence="1" type="primary">rpsU</name>
    <name type="ordered locus">BH0256</name>
</gene>
<comment type="similarity">
    <text evidence="1">Belongs to the bacterial ribosomal protein bS21 family.</text>
</comment>
<organism>
    <name type="scientific">Borrelia hermsii (strain HS1 / DAH)</name>
    <dbReference type="NCBI Taxonomy" id="314723"/>
    <lineage>
        <taxon>Bacteria</taxon>
        <taxon>Pseudomonadati</taxon>
        <taxon>Spirochaetota</taxon>
        <taxon>Spirochaetia</taxon>
        <taxon>Spirochaetales</taxon>
        <taxon>Borreliaceae</taxon>
        <taxon>Borrelia</taxon>
    </lineage>
</organism>
<feature type="chain" id="PRO_1000120592" description="Small ribosomal subunit protein bS21">
    <location>
        <begin position="1"/>
        <end position="69"/>
    </location>
</feature>